<sequence>MLLLWQSRIMPGSEANIYITMTEYLLLLIGTVLVNNFVLVKFLGLCPFMGVSKKLETAIGMGLATTFVLTLASVCAYLVESYVLRPLGIEYLRTMSFILVIAVVVQFTEMVVHKTSPTLYRLLGIFLPLITTNCAVLGVALLNINENHNFIQSIIYGFGAAVGFSLVLILFASMRERIHVADVPAPFKGASIAMITAGLMSLAFMGFTGLVKL</sequence>
<name>RNFA_VIBC3</name>
<evidence type="ECO:0000255" key="1">
    <source>
        <dbReference type="HAMAP-Rule" id="MF_00459"/>
    </source>
</evidence>
<evidence type="ECO:0000269" key="2">
    <source>
    </source>
</evidence>
<evidence type="ECO:0000305" key="3"/>
<evidence type="ECO:0000305" key="4">
    <source>
    </source>
</evidence>
<evidence type="ECO:0000312" key="5">
    <source>
        <dbReference type="EMBL" id="ABQ21142.1"/>
    </source>
</evidence>
<accession>A0A0H3AKU6</accession>
<gene>
    <name evidence="1" type="primary">rnfA</name>
    <name evidence="5" type="ordered locus">VC0395_A0538</name>
</gene>
<dbReference type="EC" id="7.-.-.-" evidence="1 3"/>
<dbReference type="EMBL" id="CP000627">
    <property type="protein sequence ID" value="ABQ21142.1"/>
    <property type="molecule type" value="Genomic_DNA"/>
</dbReference>
<dbReference type="SMR" id="A0A0H3AKU6"/>
<dbReference type="KEGG" id="vco:VC0395_A0538"/>
<dbReference type="KEGG" id="vcr:VC395_1032"/>
<dbReference type="PATRIC" id="fig|345073.21.peg.1002"/>
<dbReference type="eggNOG" id="COG4657">
    <property type="taxonomic scope" value="Bacteria"/>
</dbReference>
<dbReference type="Proteomes" id="UP000000249">
    <property type="component" value="Chromosome 2"/>
</dbReference>
<dbReference type="GO" id="GO:0005886">
    <property type="term" value="C:plasma membrane"/>
    <property type="evidence" value="ECO:0007669"/>
    <property type="project" value="UniProtKB-SubCell"/>
</dbReference>
<dbReference type="GO" id="GO:0022900">
    <property type="term" value="P:electron transport chain"/>
    <property type="evidence" value="ECO:0007669"/>
    <property type="project" value="UniProtKB-UniRule"/>
</dbReference>
<dbReference type="HAMAP" id="MF_00459">
    <property type="entry name" value="RsxA_RnfA"/>
    <property type="match status" value="1"/>
</dbReference>
<dbReference type="InterPro" id="IPR011293">
    <property type="entry name" value="Ion_transpt_RnfA/RsxA"/>
</dbReference>
<dbReference type="InterPro" id="IPR003667">
    <property type="entry name" value="NqrDE/RnfAE"/>
</dbReference>
<dbReference type="InterPro" id="IPR050133">
    <property type="entry name" value="NqrDE/RnfAE_oxidrdctase"/>
</dbReference>
<dbReference type="NCBIfam" id="NF003481">
    <property type="entry name" value="PRK05151.1"/>
    <property type="match status" value="1"/>
</dbReference>
<dbReference type="NCBIfam" id="TIGR01943">
    <property type="entry name" value="rnfA"/>
    <property type="match status" value="1"/>
</dbReference>
<dbReference type="PANTHER" id="PTHR30335">
    <property type="entry name" value="INTEGRAL MEMBRANE PROTEIN OF SOXR-REDUCING COMPLEX"/>
    <property type="match status" value="1"/>
</dbReference>
<dbReference type="PANTHER" id="PTHR30335:SF0">
    <property type="entry name" value="ION-TRANSLOCATING OXIDOREDUCTASE COMPLEX SUBUNIT A"/>
    <property type="match status" value="1"/>
</dbReference>
<dbReference type="Pfam" id="PF02508">
    <property type="entry name" value="Rnf-Nqr"/>
    <property type="match status" value="1"/>
</dbReference>
<dbReference type="PIRSF" id="PIRSF006102">
    <property type="entry name" value="NQR_DE"/>
    <property type="match status" value="1"/>
</dbReference>
<reference key="1">
    <citation type="submission" date="2007-03" db="EMBL/GenBank/DDBJ databases">
        <authorList>
            <person name="Heidelberg J."/>
        </authorList>
    </citation>
    <scope>NUCLEOTIDE SEQUENCE [LARGE SCALE GENOMIC DNA]</scope>
    <source>
        <strain>ATCC 39541 / Classical Ogawa 395 / O395</strain>
    </source>
</reference>
<reference key="2">
    <citation type="journal article" date="2015" name="Biochemistry">
        <title>Complete topology of the RNF complex from Vibrio cholerae.</title>
        <authorList>
            <person name="Hreha T.N."/>
            <person name="Mezic K.G."/>
            <person name="Herce H.D."/>
            <person name="Duffy E.B."/>
            <person name="Bourges A."/>
            <person name="Pryshchep S."/>
            <person name="Juarez O."/>
            <person name="Barquera B."/>
        </authorList>
    </citation>
    <scope>SUBCELLULAR LOCATION</scope>
    <scope>TOPOLOGY</scope>
    <source>
        <strain>ATCC 39541 / Classical Ogawa 395 / O395</strain>
    </source>
</reference>
<feature type="chain" id="PRO_0000443484" description="Ion-translocating oxidoreductase complex subunit A">
    <location>
        <begin position="1"/>
        <end position="213"/>
    </location>
</feature>
<feature type="topological domain" description="Periplasmic" evidence="4">
    <location>
        <begin position="1"/>
        <end position="24"/>
    </location>
</feature>
<feature type="transmembrane region" description="Helical" evidence="1">
    <location>
        <begin position="25"/>
        <end position="45"/>
    </location>
</feature>
<feature type="topological domain" description="Cytoplasmic" evidence="4">
    <location>
        <begin position="46"/>
        <end position="58"/>
    </location>
</feature>
<feature type="transmembrane region" description="Helical" evidence="1">
    <location>
        <begin position="59"/>
        <end position="79"/>
    </location>
</feature>
<feature type="topological domain" description="Periplasmic" evidence="4">
    <location>
        <begin position="80"/>
        <end position="86"/>
    </location>
</feature>
<feature type="transmembrane region" description="Helical" evidence="1">
    <location>
        <begin position="87"/>
        <end position="107"/>
    </location>
</feature>
<feature type="topological domain" description="Cytoplasmic" evidence="4">
    <location>
        <begin position="108"/>
        <end position="121"/>
    </location>
</feature>
<feature type="transmembrane region" description="Helical" evidence="1">
    <location>
        <begin position="122"/>
        <end position="142"/>
    </location>
</feature>
<feature type="topological domain" description="Periplasmic" evidence="4">
    <location>
        <begin position="143"/>
        <end position="153"/>
    </location>
</feature>
<feature type="transmembrane region" description="Helical" evidence="1">
    <location>
        <begin position="154"/>
        <end position="174"/>
    </location>
</feature>
<feature type="topological domain" description="Cytoplasmic" evidence="4">
    <location>
        <begin position="175"/>
        <end position="190"/>
    </location>
</feature>
<feature type="transmembrane region" description="Helical" evidence="1">
    <location>
        <begin position="191"/>
        <end position="211"/>
    </location>
</feature>
<feature type="topological domain" description="Periplasmic" evidence="2">
    <location>
        <begin position="212"/>
        <end position="213"/>
    </location>
</feature>
<comment type="function">
    <text evidence="1">Part of a membrane-bound complex that couples electron transfer with translocation of ions across the membrane.</text>
</comment>
<comment type="subunit">
    <text evidence="1">The complex is composed of six subunits: RnfA, RnfB, RnfC, RnfD, RnfE and RnfG.</text>
</comment>
<comment type="subcellular location">
    <subcellularLocation>
        <location evidence="1 2">Cell inner membrane</location>
        <topology evidence="1">Multi-pass membrane protein</topology>
    </subcellularLocation>
</comment>
<comment type="similarity">
    <text evidence="1">Belongs to the NqrDE/RnfAE family.</text>
</comment>
<protein>
    <recommendedName>
        <fullName evidence="1 3">Ion-translocating oxidoreductase complex subunit A</fullName>
        <ecNumber evidence="1 3">7.-.-.-</ecNumber>
    </recommendedName>
    <alternativeName>
        <fullName evidence="1 3">Rnf electron transport complex subunit A</fullName>
    </alternativeName>
</protein>
<proteinExistence type="evidence at protein level"/>
<organism>
    <name type="scientific">Vibrio cholerae serotype O1 (strain ATCC 39541 / Classical Ogawa 395 / O395)</name>
    <dbReference type="NCBI Taxonomy" id="345073"/>
    <lineage>
        <taxon>Bacteria</taxon>
        <taxon>Pseudomonadati</taxon>
        <taxon>Pseudomonadota</taxon>
        <taxon>Gammaproteobacteria</taxon>
        <taxon>Vibrionales</taxon>
        <taxon>Vibrionaceae</taxon>
        <taxon>Vibrio</taxon>
    </lineage>
</organism>
<keyword id="KW-0997">Cell inner membrane</keyword>
<keyword id="KW-1003">Cell membrane</keyword>
<keyword id="KW-0249">Electron transport</keyword>
<keyword id="KW-0472">Membrane</keyword>
<keyword id="KW-1278">Translocase</keyword>
<keyword id="KW-0812">Transmembrane</keyword>
<keyword id="KW-1133">Transmembrane helix</keyword>
<keyword id="KW-0813">Transport</keyword>